<sequence length="134" mass="14934">MEQGLVVTQLDVQPGECVKVKGKILSDAKGFSVNVGKDSSTLMLHFNPRFDCHGDVNTVVCNSKEDGTWGEEDRKADFPFQQGDKVEICISFDAAEVKVKVPEVEFEFPNRLGMEKIQYLAVEGDFKVKAIKFS</sequence>
<feature type="chain" id="PRO_0000076952" description="16 kDa beta-galactoside-binding lectin">
    <location>
        <begin position="1"/>
        <end position="134"/>
    </location>
</feature>
<feature type="domain" description="Galectin" evidence="2">
    <location>
        <begin position="4"/>
        <end position="134"/>
    </location>
</feature>
<feature type="binding site" evidence="1">
    <location>
        <begin position="69"/>
        <end position="75"/>
    </location>
    <ligand>
        <name>a beta-D-galactoside</name>
        <dbReference type="ChEBI" id="CHEBI:28034"/>
    </ligand>
</feature>
<feature type="modified residue" description="N-acetylmethionine" evidence="3">
    <location>
        <position position="1"/>
    </location>
</feature>
<feature type="strand" evidence="4">
    <location>
        <begin position="6"/>
        <end position="9"/>
    </location>
</feature>
<feature type="strand" evidence="4">
    <location>
        <begin position="18"/>
        <end position="24"/>
    </location>
</feature>
<feature type="strand" evidence="4">
    <location>
        <begin position="29"/>
        <end position="38"/>
    </location>
</feature>
<feature type="strand" evidence="4">
    <location>
        <begin position="41"/>
        <end position="52"/>
    </location>
</feature>
<feature type="strand" evidence="4">
    <location>
        <begin position="55"/>
        <end position="61"/>
    </location>
</feature>
<feature type="strand" evidence="4">
    <location>
        <begin position="73"/>
        <end position="76"/>
    </location>
</feature>
<feature type="strand" evidence="4">
    <location>
        <begin position="85"/>
        <end position="92"/>
    </location>
</feature>
<feature type="strand" evidence="4">
    <location>
        <begin position="94"/>
        <end position="100"/>
    </location>
</feature>
<feature type="strand" evidence="4">
    <location>
        <begin position="105"/>
        <end position="109"/>
    </location>
</feature>
<feature type="strand" evidence="4">
    <location>
        <begin position="119"/>
        <end position="133"/>
    </location>
</feature>
<organism>
    <name type="scientific">Gallus gallus</name>
    <name type="common">Chicken</name>
    <dbReference type="NCBI Taxonomy" id="9031"/>
    <lineage>
        <taxon>Eukaryota</taxon>
        <taxon>Metazoa</taxon>
        <taxon>Chordata</taxon>
        <taxon>Craniata</taxon>
        <taxon>Vertebrata</taxon>
        <taxon>Euteleostomi</taxon>
        <taxon>Archelosauria</taxon>
        <taxon>Archosauria</taxon>
        <taxon>Dinosauria</taxon>
        <taxon>Saurischia</taxon>
        <taxon>Theropoda</taxon>
        <taxon>Coelurosauria</taxon>
        <taxon>Aves</taxon>
        <taxon>Neognathae</taxon>
        <taxon>Galloanserae</taxon>
        <taxon>Galliformes</taxon>
        <taxon>Phasianidae</taxon>
        <taxon>Phasianinae</taxon>
        <taxon>Gallus</taxon>
    </lineage>
</organism>
<keyword id="KW-0002">3D-structure</keyword>
<keyword id="KW-0007">Acetylation</keyword>
<keyword id="KW-0903">Direct protein sequencing</keyword>
<keyword id="KW-0430">Lectin</keyword>
<keyword id="KW-1185">Reference proteome</keyword>
<name>LEG6_CHICK</name>
<accession>P23668</accession>
<accession>Q53YM0</accession>
<comment type="function">
    <text>This protein binds beta-galactoside. Its physiological function is not yet known. It may be involved in the regulation of differentiation.</text>
</comment>
<comment type="subunit">
    <text>Homodimer.</text>
</comment>
<comment type="tissue specificity">
    <text>Mainly in the liver (adult), mainly in the muscle (embryo).</text>
</comment>
<protein>
    <recommendedName>
        <fullName>16 kDa beta-galactoside-binding lectin</fullName>
    </recommendedName>
    <alternativeName>
        <fullName>C-16</fullName>
    </alternativeName>
    <alternativeName>
        <fullName>Galectin CG-16</fullName>
    </alternativeName>
</protein>
<evidence type="ECO:0000255" key="1"/>
<evidence type="ECO:0000255" key="2">
    <source>
        <dbReference type="PROSITE-ProRule" id="PRU00639"/>
    </source>
</evidence>
<evidence type="ECO:0000269" key="3">
    <source>
    </source>
</evidence>
<evidence type="ECO:0007829" key="4">
    <source>
        <dbReference type="PDB" id="1QMJ"/>
    </source>
</evidence>
<reference key="1">
    <citation type="submission" date="2004-02" db="EMBL/GenBank/DDBJ databases">
        <title>Chicken galectin CG-16 (16 kDa beta-galactoside-binding lectin), full length cDNA from embryonic kidney.</title>
        <authorList>
            <person name="Kaltner H."/>
            <person name="Gabius H.-J."/>
        </authorList>
    </citation>
    <scope>NUCLEOTIDE SEQUENCE [MRNA]</scope>
    <source>
        <tissue>Kidney</tissue>
    </source>
</reference>
<reference key="2">
    <citation type="journal article" date="1990" name="J. Biol. Chem.">
        <title>Structure of chicken 16-kDa beta-galactoside-binding lectin. Complete amino acid sequence, cloning of cDNA, and production of recombinant lectin.</title>
        <authorList>
            <person name="Sakakura Y."/>
            <person name="Hirabayashi J."/>
            <person name="Oda Y."/>
            <person name="Ohyama Y."/>
            <person name="Kasai K."/>
        </authorList>
    </citation>
    <scope>NUCLEOTIDE SEQUENCE [MRNA] OF 1-117</scope>
    <scope>PROTEIN SEQUENCE OF 1-60; 65-98 AND 101-134</scope>
    <scope>ACETYLATION AT MET-1</scope>
    <source>
        <tissue>Liver</tissue>
    </source>
</reference>
<reference key="3">
    <citation type="journal article" date="1999" name="J. Mol. Biol.">
        <title>The 2.15 A crystal structure of CG-16, the developmentally regulated homodimeric chicken galectin.</title>
        <authorList>
            <person name="Varela P.F."/>
            <person name="Solis D."/>
            <person name="Diaz-Maurino T."/>
            <person name="Kaltner H."/>
            <person name="Gabius H.-J."/>
            <person name="Romero A."/>
        </authorList>
    </citation>
    <scope>X-RAY CRYSTALLOGRAPHY (2.15 ANGSTROMS)</scope>
    <source>
        <tissue>Liver</tissue>
    </source>
</reference>
<dbReference type="EMBL" id="AY553270">
    <property type="protein sequence ID" value="AAS59560.1"/>
    <property type="molecule type" value="mRNA"/>
</dbReference>
<dbReference type="EMBL" id="M57240">
    <property type="protein sequence ID" value="AAA48626.1"/>
    <property type="molecule type" value="mRNA"/>
</dbReference>
<dbReference type="PIR" id="A36496">
    <property type="entry name" value="LNCH16"/>
</dbReference>
<dbReference type="RefSeq" id="NP_996788.1">
    <property type="nucleotide sequence ID" value="NM_206905.2"/>
</dbReference>
<dbReference type="PDB" id="1QMJ">
    <property type="method" value="X-ray"/>
    <property type="resolution" value="2.15 A"/>
    <property type="chains" value="A/B=3-134"/>
</dbReference>
<dbReference type="PDBsum" id="1QMJ"/>
<dbReference type="SMR" id="P23668"/>
<dbReference type="FunCoup" id="P23668">
    <property type="interactions" value="1528"/>
</dbReference>
<dbReference type="STRING" id="9031.ENSGALP00000044554"/>
<dbReference type="UniLectin" id="P23668"/>
<dbReference type="iPTMnet" id="P23668"/>
<dbReference type="PaxDb" id="9031-ENSGALP00000041067"/>
<dbReference type="GeneID" id="404269"/>
<dbReference type="KEGG" id="gga:404269"/>
<dbReference type="CTD" id="404269"/>
<dbReference type="VEuPathDB" id="HostDB:geneid_404269"/>
<dbReference type="eggNOG" id="KOG3587">
    <property type="taxonomic scope" value="Eukaryota"/>
</dbReference>
<dbReference type="HOGENOM" id="CLU_037794_5_0_1"/>
<dbReference type="InParanoid" id="P23668"/>
<dbReference type="OMA" id="AEFQFPN"/>
<dbReference type="OrthoDB" id="8443340at2759"/>
<dbReference type="PhylomeDB" id="P23668"/>
<dbReference type="EvolutionaryTrace" id="P23668"/>
<dbReference type="PRO" id="PR:P23668"/>
<dbReference type="Proteomes" id="UP000000539">
    <property type="component" value="Unassembled WGS sequence"/>
</dbReference>
<dbReference type="GO" id="GO:0005615">
    <property type="term" value="C:extracellular space"/>
    <property type="evidence" value="ECO:0000318"/>
    <property type="project" value="GO_Central"/>
</dbReference>
<dbReference type="GO" id="GO:0030395">
    <property type="term" value="F:lactose binding"/>
    <property type="evidence" value="ECO:0000318"/>
    <property type="project" value="GO_Central"/>
</dbReference>
<dbReference type="GO" id="GO:0043236">
    <property type="term" value="F:laminin binding"/>
    <property type="evidence" value="ECO:0000318"/>
    <property type="project" value="GO_Central"/>
</dbReference>
<dbReference type="CDD" id="cd00070">
    <property type="entry name" value="GLECT"/>
    <property type="match status" value="1"/>
</dbReference>
<dbReference type="FunFam" id="2.60.120.200:FF:000021">
    <property type="entry name" value="Galectin"/>
    <property type="match status" value="1"/>
</dbReference>
<dbReference type="Gene3D" id="2.60.120.200">
    <property type="match status" value="1"/>
</dbReference>
<dbReference type="InterPro" id="IPR013320">
    <property type="entry name" value="ConA-like_dom_sf"/>
</dbReference>
<dbReference type="InterPro" id="IPR044156">
    <property type="entry name" value="Galectin-like"/>
</dbReference>
<dbReference type="InterPro" id="IPR001079">
    <property type="entry name" value="Galectin_CRD"/>
</dbReference>
<dbReference type="PANTHER" id="PTHR11346">
    <property type="entry name" value="GALECTIN"/>
    <property type="match status" value="1"/>
</dbReference>
<dbReference type="PANTHER" id="PTHR11346:SF97">
    <property type="entry name" value="GALECTIN-1"/>
    <property type="match status" value="1"/>
</dbReference>
<dbReference type="Pfam" id="PF00337">
    <property type="entry name" value="Gal-bind_lectin"/>
    <property type="match status" value="1"/>
</dbReference>
<dbReference type="SMART" id="SM00908">
    <property type="entry name" value="Gal-bind_lectin"/>
    <property type="match status" value="1"/>
</dbReference>
<dbReference type="SMART" id="SM00276">
    <property type="entry name" value="GLECT"/>
    <property type="match status" value="1"/>
</dbReference>
<dbReference type="SUPFAM" id="SSF49899">
    <property type="entry name" value="Concanavalin A-like lectins/glucanases"/>
    <property type="match status" value="1"/>
</dbReference>
<dbReference type="PROSITE" id="PS51304">
    <property type="entry name" value="GALECTIN"/>
    <property type="match status" value="1"/>
</dbReference>
<proteinExistence type="evidence at protein level"/>